<dbReference type="EC" id="3.2.1.99"/>
<dbReference type="EMBL" id="L23430">
    <property type="protein sequence ID" value="AAA32682.1"/>
    <property type="molecule type" value="Genomic_DNA"/>
</dbReference>
<dbReference type="SMR" id="P42256"/>
<dbReference type="CAZy" id="GH43">
    <property type="family name" value="Glycoside Hydrolase Family 43"/>
</dbReference>
<dbReference type="GlyCosmos" id="P42256">
    <property type="glycosylation" value="1 site, No reported glycans"/>
</dbReference>
<dbReference type="PaxDb" id="5061-CADANGAP00007516"/>
<dbReference type="VEuPathDB" id="FungiDB:An09g01190"/>
<dbReference type="VEuPathDB" id="FungiDB:ASPNIDRAFT2_1114612"/>
<dbReference type="VEuPathDB" id="FungiDB:ATCC64974_6800"/>
<dbReference type="VEuPathDB" id="FungiDB:M747DRAFT_282673"/>
<dbReference type="eggNOG" id="ENOG502QTQG">
    <property type="taxonomic scope" value="Eukaryota"/>
</dbReference>
<dbReference type="OrthoDB" id="195678at2759"/>
<dbReference type="BioCyc" id="MetaCyc:MONOMER-16541"/>
<dbReference type="UniPathway" id="UPA00667"/>
<dbReference type="GO" id="GO:0046558">
    <property type="term" value="F:arabinan endo-1,5-alpha-L-arabinosidase activity"/>
    <property type="evidence" value="ECO:0007669"/>
    <property type="project" value="UniProtKB-EC"/>
</dbReference>
<dbReference type="GO" id="GO:0031222">
    <property type="term" value="P:arabinan catabolic process"/>
    <property type="evidence" value="ECO:0007669"/>
    <property type="project" value="UniProtKB-UniPathway"/>
</dbReference>
<dbReference type="CDD" id="cd18831">
    <property type="entry name" value="GH43_AnAbnA-like"/>
    <property type="match status" value="1"/>
</dbReference>
<dbReference type="FunFam" id="2.115.10.20:FF:000005">
    <property type="entry name" value="Arabinan endo-1,5-alpha-L-arabinosidase"/>
    <property type="match status" value="1"/>
</dbReference>
<dbReference type="Gene3D" id="2.115.10.20">
    <property type="entry name" value="Glycosyl hydrolase domain, family 43"/>
    <property type="match status" value="1"/>
</dbReference>
<dbReference type="InterPro" id="IPR050727">
    <property type="entry name" value="GH43_arabinanases"/>
</dbReference>
<dbReference type="InterPro" id="IPR006710">
    <property type="entry name" value="Glyco_hydro_43"/>
</dbReference>
<dbReference type="InterPro" id="IPR016840">
    <property type="entry name" value="Glyco_hydro_43_endo_a_Ara-ase"/>
</dbReference>
<dbReference type="InterPro" id="IPR023296">
    <property type="entry name" value="Glyco_hydro_beta-prop_sf"/>
</dbReference>
<dbReference type="PANTHER" id="PTHR43301">
    <property type="entry name" value="ARABINAN ENDO-1,5-ALPHA-L-ARABINOSIDASE"/>
    <property type="match status" value="1"/>
</dbReference>
<dbReference type="PANTHER" id="PTHR43301:SF3">
    <property type="entry name" value="ARABINAN ENDO-1,5-ALPHA-L-ARABINOSIDASE A-RELATED"/>
    <property type="match status" value="1"/>
</dbReference>
<dbReference type="Pfam" id="PF04616">
    <property type="entry name" value="Glyco_hydro_43"/>
    <property type="match status" value="1"/>
</dbReference>
<dbReference type="PIRSF" id="PIRSF026534">
    <property type="entry name" value="Endo_alpha-L-arabinosidase"/>
    <property type="match status" value="1"/>
</dbReference>
<dbReference type="SUPFAM" id="SSF75005">
    <property type="entry name" value="Arabinanase/levansucrase/invertase"/>
    <property type="match status" value="1"/>
</dbReference>
<sequence>MYQLLSVASVPLLASLVHGYADPGACSGVCTTHDPGLIRRESDGTYFLFSTGNKISYVSASSIEGPWTSVGSMLPDGSSIDLDGNDDLWAPDVSYVDGLYYVYYAVSTFGSQDSAIGLATSETMEYGSWTDHGSTGIASSSAKIYNAIDPNLIYADGTYYINFGSFWDDIYQVPMKSTPTAAASSSYNLAYDPSGTHAEEGSYMFQYGDYYYLFYSAGICCGYDTSMPASGEEYHIKVCRSTSPTGDFVDSDGTACTDGGGTMVLESHGEVYGPGGQGVYDDPNLGPVLYYHYMNTTIGYADSDAQFGWNTIDFSSGWPVV</sequence>
<feature type="signal peptide" evidence="3">
    <location>
        <begin position="1"/>
        <end position="19"/>
    </location>
</feature>
<feature type="chain" id="PRO_0000012204" description="Arabinan endo-1,5-alpha-L-arabinosidase A">
    <location>
        <begin position="20"/>
        <end position="321"/>
    </location>
</feature>
<feature type="active site" description="Proton acceptor" evidence="1">
    <location>
        <position position="34"/>
    </location>
</feature>
<feature type="active site" description="Proton donor" evidence="1">
    <location>
        <position position="200"/>
    </location>
</feature>
<feature type="site" description="Important for catalytic activity, responsible for pKa modulation of the active site Glu and correct orientation of both the proton donor and substrate" evidence="1">
    <location>
        <position position="149"/>
    </location>
</feature>
<feature type="glycosylation site" description="N-linked (GlcNAc...) asparagine" evidence="2">
    <location>
        <position position="295"/>
    </location>
</feature>
<accession>P42256</accession>
<protein>
    <recommendedName>
        <fullName>Arabinan endo-1,5-alpha-L-arabinosidase A</fullName>
        <ecNumber>3.2.1.99</ecNumber>
    </recommendedName>
    <alternativeName>
        <fullName>Endo-1,5-alpha-L-arabinanase A</fullName>
        <shortName>ABN A</shortName>
    </alternativeName>
</protein>
<name>ABNA_ASPNG</name>
<organism>
    <name type="scientific">Aspergillus niger</name>
    <dbReference type="NCBI Taxonomy" id="5061"/>
    <lineage>
        <taxon>Eukaryota</taxon>
        <taxon>Fungi</taxon>
        <taxon>Dikarya</taxon>
        <taxon>Ascomycota</taxon>
        <taxon>Pezizomycotina</taxon>
        <taxon>Eurotiomycetes</taxon>
        <taxon>Eurotiomycetidae</taxon>
        <taxon>Eurotiales</taxon>
        <taxon>Aspergillaceae</taxon>
        <taxon>Aspergillus</taxon>
        <taxon>Aspergillus subgen. Circumdati</taxon>
    </lineage>
</organism>
<comment type="function">
    <text>Its preferred substrate is linear 1,5-alpha-L-arabinan. The enzyme activity is progressively reduced as 1,5-alpha-chains become shorter or more highly substituted.</text>
</comment>
<comment type="catalytic activity">
    <reaction>
        <text>Endohydrolysis of (1-&gt;5)-alpha-arabinofuranosidic linkages in (1-&gt;5)-arabinans.</text>
        <dbReference type="EC" id="3.2.1.99"/>
    </reaction>
</comment>
<comment type="pathway">
    <text>Glycan metabolism; L-arabinan degradation.</text>
</comment>
<comment type="induction">
    <text>By L-araban, arabinogalactan and L-arabitol.</text>
</comment>
<comment type="similarity">
    <text evidence="4">Belongs to the glycosyl hydrolase 43 family.</text>
</comment>
<gene>
    <name type="primary">abnA</name>
</gene>
<proteinExistence type="evidence at protein level"/>
<keyword id="KW-0903">Direct protein sequencing</keyword>
<keyword id="KW-0325">Glycoprotein</keyword>
<keyword id="KW-0326">Glycosidase</keyword>
<keyword id="KW-0378">Hydrolase</keyword>
<keyword id="KW-0732">Signal</keyword>
<reference key="1">
    <citation type="journal article" date="1993" name="Appl. Microbiol. Biotechnol.">
        <title>Molecular cloning, expression and structure of the endo-1,5-alpha-L-arabinase gene of Aspergillus niger.</title>
        <authorList>
            <person name="Flipphi M.J.A."/>
            <person name="Panneman H."/>
            <person name="van der Veen P."/>
            <person name="Visser J."/>
            <person name="de Graaff L.H."/>
        </authorList>
    </citation>
    <scope>NUCLEOTIDE SEQUENCE [GENOMIC DNA]</scope>
    <scope>PROTEIN SEQUENCE OF 20-32 AND 125-139</scope>
    <source>
        <strain>ATCC 9029 / NRRL 3 / CBS 120.49 / DSM 2466 / N400 / FGSC 732</strain>
    </source>
</reference>
<evidence type="ECO:0000250" key="1">
    <source>
        <dbReference type="UniProtKB" id="P94522"/>
    </source>
</evidence>
<evidence type="ECO:0000255" key="2"/>
<evidence type="ECO:0000269" key="3">
    <source>
    </source>
</evidence>
<evidence type="ECO:0000305" key="4"/>